<accession>Q5NR75</accession>
<reference key="1">
    <citation type="journal article" date="2005" name="Nat. Biotechnol.">
        <title>The genome sequence of the ethanologenic bacterium Zymomonas mobilis ZM4.</title>
        <authorList>
            <person name="Seo J.-S."/>
            <person name="Chong H."/>
            <person name="Park H.S."/>
            <person name="Yoon K.-O."/>
            <person name="Jung C."/>
            <person name="Kim J.J."/>
            <person name="Hong J.H."/>
            <person name="Kim H."/>
            <person name="Kim J.-H."/>
            <person name="Kil J.-I."/>
            <person name="Park C.J."/>
            <person name="Oh H.-M."/>
            <person name="Lee J.-S."/>
            <person name="Jin S.-J."/>
            <person name="Um H.-W."/>
            <person name="Lee H.-J."/>
            <person name="Oh S.-J."/>
            <person name="Kim J.Y."/>
            <person name="Kang H.L."/>
            <person name="Lee S.Y."/>
            <person name="Lee K.J."/>
            <person name="Kang H.S."/>
        </authorList>
    </citation>
    <scope>NUCLEOTIDE SEQUENCE [LARGE SCALE GENOMIC DNA]</scope>
    <source>
        <strain>ATCC 31821 / ZM4 / CP4</strain>
    </source>
</reference>
<comment type="function">
    <text evidence="1">The RuvA-RuvB-RuvC complex processes Holliday junction (HJ) DNA during genetic recombination and DNA repair, while the RuvA-RuvB complex plays an important role in the rescue of blocked DNA replication forks via replication fork reversal (RFR). RuvA specifically binds to HJ cruciform DNA, conferring on it an open structure. The RuvB hexamer acts as an ATP-dependent pump, pulling dsDNA into and through the RuvAB complex. HJ branch migration allows RuvC to scan DNA until it finds its consensus sequence, where it cleaves and resolves the cruciform DNA.</text>
</comment>
<comment type="subunit">
    <text evidence="1">Homotetramer. Forms an RuvA(8)-RuvB(12)-Holliday junction (HJ) complex. HJ DNA is sandwiched between 2 RuvA tetramers; dsDNA enters through RuvA and exits via RuvB. An RuvB hexamer assembles on each DNA strand where it exits the tetramer. Each RuvB hexamer is contacted by two RuvA subunits (via domain III) on 2 adjacent RuvB subunits; this complex drives branch migration. In the full resolvosome a probable DNA-RuvA(4)-RuvB(12)-RuvC(2) complex forms which resolves the HJ.</text>
</comment>
<comment type="subcellular location">
    <subcellularLocation>
        <location evidence="1">Cytoplasm</location>
    </subcellularLocation>
</comment>
<comment type="domain">
    <text evidence="1">Has three domains with a flexible linker between the domains II and III and assumes an 'L' shape. Domain III is highly mobile and contacts RuvB.</text>
</comment>
<comment type="similarity">
    <text evidence="1">Belongs to the RuvA family.</text>
</comment>
<feature type="chain" id="PRO_0000224926" description="Holliday junction branch migration complex subunit RuvA">
    <location>
        <begin position="1"/>
        <end position="213"/>
    </location>
</feature>
<feature type="region of interest" description="Domain I" evidence="1">
    <location>
        <begin position="1"/>
        <end position="64"/>
    </location>
</feature>
<feature type="region of interest" description="Domain II" evidence="1">
    <location>
        <begin position="65"/>
        <end position="143"/>
    </location>
</feature>
<feature type="region of interest" description="Flexible linker" evidence="1">
    <location>
        <begin position="144"/>
        <end position="159"/>
    </location>
</feature>
<feature type="region of interest" description="Domain III" evidence="1">
    <location>
        <begin position="160"/>
        <end position="213"/>
    </location>
</feature>
<name>RUVA_ZYMMO</name>
<dbReference type="EMBL" id="AE008692">
    <property type="protein sequence ID" value="AAV88779.1"/>
    <property type="molecule type" value="Genomic_DNA"/>
</dbReference>
<dbReference type="RefSeq" id="WP_011240115.1">
    <property type="nucleotide sequence ID" value="NZ_CP035711.1"/>
</dbReference>
<dbReference type="SMR" id="Q5NR75"/>
<dbReference type="STRING" id="264203.ZMO0155"/>
<dbReference type="GeneID" id="79904602"/>
<dbReference type="KEGG" id="zmo:ZMO0155"/>
<dbReference type="eggNOG" id="COG0632">
    <property type="taxonomic scope" value="Bacteria"/>
</dbReference>
<dbReference type="HOGENOM" id="CLU_087936_3_0_5"/>
<dbReference type="Proteomes" id="UP000001173">
    <property type="component" value="Chromosome"/>
</dbReference>
<dbReference type="GO" id="GO:0005737">
    <property type="term" value="C:cytoplasm"/>
    <property type="evidence" value="ECO:0007669"/>
    <property type="project" value="UniProtKB-SubCell"/>
</dbReference>
<dbReference type="GO" id="GO:0009379">
    <property type="term" value="C:Holliday junction helicase complex"/>
    <property type="evidence" value="ECO:0007669"/>
    <property type="project" value="InterPro"/>
</dbReference>
<dbReference type="GO" id="GO:0048476">
    <property type="term" value="C:Holliday junction resolvase complex"/>
    <property type="evidence" value="ECO:0007669"/>
    <property type="project" value="UniProtKB-UniRule"/>
</dbReference>
<dbReference type="GO" id="GO:0005524">
    <property type="term" value="F:ATP binding"/>
    <property type="evidence" value="ECO:0007669"/>
    <property type="project" value="InterPro"/>
</dbReference>
<dbReference type="GO" id="GO:0000400">
    <property type="term" value="F:four-way junction DNA binding"/>
    <property type="evidence" value="ECO:0007669"/>
    <property type="project" value="UniProtKB-UniRule"/>
</dbReference>
<dbReference type="GO" id="GO:0009378">
    <property type="term" value="F:four-way junction helicase activity"/>
    <property type="evidence" value="ECO:0007669"/>
    <property type="project" value="InterPro"/>
</dbReference>
<dbReference type="GO" id="GO:0006310">
    <property type="term" value="P:DNA recombination"/>
    <property type="evidence" value="ECO:0007669"/>
    <property type="project" value="UniProtKB-UniRule"/>
</dbReference>
<dbReference type="GO" id="GO:0006281">
    <property type="term" value="P:DNA repair"/>
    <property type="evidence" value="ECO:0007669"/>
    <property type="project" value="UniProtKB-UniRule"/>
</dbReference>
<dbReference type="CDD" id="cd14332">
    <property type="entry name" value="UBA_RuvA_C"/>
    <property type="match status" value="1"/>
</dbReference>
<dbReference type="Gene3D" id="1.10.150.20">
    <property type="entry name" value="5' to 3' exonuclease, C-terminal subdomain"/>
    <property type="match status" value="1"/>
</dbReference>
<dbReference type="Gene3D" id="1.10.8.10">
    <property type="entry name" value="DNA helicase RuvA subunit, C-terminal domain"/>
    <property type="match status" value="1"/>
</dbReference>
<dbReference type="Gene3D" id="2.40.50.140">
    <property type="entry name" value="Nucleic acid-binding proteins"/>
    <property type="match status" value="1"/>
</dbReference>
<dbReference type="HAMAP" id="MF_00031">
    <property type="entry name" value="DNA_HJ_migration_RuvA"/>
    <property type="match status" value="1"/>
</dbReference>
<dbReference type="InterPro" id="IPR013849">
    <property type="entry name" value="DNA_helicase_Holl-junc_RuvA_I"/>
</dbReference>
<dbReference type="InterPro" id="IPR003583">
    <property type="entry name" value="Hlx-hairpin-Hlx_DNA-bd_motif"/>
</dbReference>
<dbReference type="InterPro" id="IPR012340">
    <property type="entry name" value="NA-bd_OB-fold"/>
</dbReference>
<dbReference type="InterPro" id="IPR000085">
    <property type="entry name" value="RuvA"/>
</dbReference>
<dbReference type="InterPro" id="IPR010994">
    <property type="entry name" value="RuvA_2-like"/>
</dbReference>
<dbReference type="InterPro" id="IPR011114">
    <property type="entry name" value="RuvA_C"/>
</dbReference>
<dbReference type="InterPro" id="IPR036267">
    <property type="entry name" value="RuvA_C_sf"/>
</dbReference>
<dbReference type="NCBIfam" id="TIGR00084">
    <property type="entry name" value="ruvA"/>
    <property type="match status" value="1"/>
</dbReference>
<dbReference type="Pfam" id="PF14520">
    <property type="entry name" value="HHH_5"/>
    <property type="match status" value="1"/>
</dbReference>
<dbReference type="Pfam" id="PF07499">
    <property type="entry name" value="RuvA_C"/>
    <property type="match status" value="1"/>
</dbReference>
<dbReference type="Pfam" id="PF01330">
    <property type="entry name" value="RuvA_N"/>
    <property type="match status" value="1"/>
</dbReference>
<dbReference type="SMART" id="SM00278">
    <property type="entry name" value="HhH1"/>
    <property type="match status" value="2"/>
</dbReference>
<dbReference type="SUPFAM" id="SSF46929">
    <property type="entry name" value="DNA helicase RuvA subunit, C-terminal domain"/>
    <property type="match status" value="1"/>
</dbReference>
<dbReference type="SUPFAM" id="SSF50249">
    <property type="entry name" value="Nucleic acid-binding proteins"/>
    <property type="match status" value="1"/>
</dbReference>
<dbReference type="SUPFAM" id="SSF47781">
    <property type="entry name" value="RuvA domain 2-like"/>
    <property type="match status" value="1"/>
</dbReference>
<organism>
    <name type="scientific">Zymomonas mobilis subsp. mobilis (strain ATCC 31821 / ZM4 / CP4)</name>
    <dbReference type="NCBI Taxonomy" id="264203"/>
    <lineage>
        <taxon>Bacteria</taxon>
        <taxon>Pseudomonadati</taxon>
        <taxon>Pseudomonadota</taxon>
        <taxon>Alphaproteobacteria</taxon>
        <taxon>Sphingomonadales</taxon>
        <taxon>Zymomonadaceae</taxon>
        <taxon>Zymomonas</taxon>
    </lineage>
</organism>
<keyword id="KW-0963">Cytoplasm</keyword>
<keyword id="KW-0227">DNA damage</keyword>
<keyword id="KW-0233">DNA recombination</keyword>
<keyword id="KW-0234">DNA repair</keyword>
<keyword id="KW-0238">DNA-binding</keyword>
<keyword id="KW-1185">Reference proteome</keyword>
<sequence>MIARLVGFLVEKNSDSAVIDVNGVGYLVQLSGRALDYFSEIEGEITVHIETQIREDSITLFGFASYLERDWFRLLTSVQGVGGKAALAILTALTCDAISVAISSGDKTMICRANGIGPKIAQRIINELKEKPAAIALFSSAKGDHLAVEDISQPAASAHHAGNFMADAVSALLNLGFKPAEAQRVVQLASEELGDQATLDSLVRLALRLSSKH</sequence>
<gene>
    <name evidence="1" type="primary">ruvA</name>
    <name type="ordered locus">ZMO0155</name>
</gene>
<evidence type="ECO:0000255" key="1">
    <source>
        <dbReference type="HAMAP-Rule" id="MF_00031"/>
    </source>
</evidence>
<proteinExistence type="inferred from homology"/>
<protein>
    <recommendedName>
        <fullName evidence="1">Holliday junction branch migration complex subunit RuvA</fullName>
    </recommendedName>
</protein>